<sequence>MQKTFFIIKPDAVKRHLIGQVLDRIERRGFVIERMEMLMLDEERLKEHYAQLADKPFFPSISEFMMSGPAVIGIMSGPGVIKSWRDMMGATNPGDAAPGTIRGDFATAPDGDMIPNIVHGSDSEESAAREIKIWFGE</sequence>
<name>NDK_STRT2</name>
<comment type="function">
    <text evidence="1">Major role in the synthesis of nucleoside triphosphates other than ATP. The ATP gamma phosphate is transferred to the NDP beta phosphate via a ping-pong mechanism, using a phosphorylated active-site intermediate.</text>
</comment>
<comment type="catalytic activity">
    <reaction evidence="1">
        <text>a 2'-deoxyribonucleoside 5'-diphosphate + ATP = a 2'-deoxyribonucleoside 5'-triphosphate + ADP</text>
        <dbReference type="Rhea" id="RHEA:44640"/>
        <dbReference type="ChEBI" id="CHEBI:30616"/>
        <dbReference type="ChEBI" id="CHEBI:61560"/>
        <dbReference type="ChEBI" id="CHEBI:73316"/>
        <dbReference type="ChEBI" id="CHEBI:456216"/>
        <dbReference type="EC" id="2.7.4.6"/>
    </reaction>
</comment>
<comment type="catalytic activity">
    <reaction evidence="1">
        <text>a ribonucleoside 5'-diphosphate + ATP = a ribonucleoside 5'-triphosphate + ADP</text>
        <dbReference type="Rhea" id="RHEA:18113"/>
        <dbReference type="ChEBI" id="CHEBI:30616"/>
        <dbReference type="ChEBI" id="CHEBI:57930"/>
        <dbReference type="ChEBI" id="CHEBI:61557"/>
        <dbReference type="ChEBI" id="CHEBI:456216"/>
        <dbReference type="EC" id="2.7.4.6"/>
    </reaction>
</comment>
<comment type="cofactor">
    <cofactor evidence="1">
        <name>Mg(2+)</name>
        <dbReference type="ChEBI" id="CHEBI:18420"/>
    </cofactor>
</comment>
<comment type="subunit">
    <text evidence="1">Homotetramer.</text>
</comment>
<comment type="subcellular location">
    <subcellularLocation>
        <location evidence="1">Cytoplasm</location>
    </subcellularLocation>
</comment>
<comment type="similarity">
    <text evidence="1">Belongs to the NDK family.</text>
</comment>
<comment type="sequence caution" evidence="2">
    <conflict type="erroneous initiation">
        <sequence resource="EMBL-CDS" id="AAV60573"/>
    </conflict>
</comment>
<keyword id="KW-0067">ATP-binding</keyword>
<keyword id="KW-0963">Cytoplasm</keyword>
<keyword id="KW-0418">Kinase</keyword>
<keyword id="KW-0460">Magnesium</keyword>
<keyword id="KW-0479">Metal-binding</keyword>
<keyword id="KW-0546">Nucleotide metabolism</keyword>
<keyword id="KW-0547">Nucleotide-binding</keyword>
<keyword id="KW-0597">Phosphoprotein</keyword>
<keyword id="KW-1185">Reference proteome</keyword>
<keyword id="KW-0808">Transferase</keyword>
<evidence type="ECO:0000255" key="1">
    <source>
        <dbReference type="HAMAP-Rule" id="MF_00451"/>
    </source>
</evidence>
<evidence type="ECO:0000305" key="2"/>
<feature type="chain" id="PRO_0000137059" description="Nucleoside diphosphate kinase">
    <location>
        <begin position="1"/>
        <end position="137"/>
    </location>
</feature>
<feature type="active site" description="Pros-phosphohistidine intermediate" evidence="1">
    <location>
        <position position="119"/>
    </location>
</feature>
<feature type="binding site" evidence="1">
    <location>
        <position position="9"/>
    </location>
    <ligand>
        <name>ATP</name>
        <dbReference type="ChEBI" id="CHEBI:30616"/>
    </ligand>
</feature>
<feature type="binding site" evidence="1">
    <location>
        <position position="57"/>
    </location>
    <ligand>
        <name>ATP</name>
        <dbReference type="ChEBI" id="CHEBI:30616"/>
    </ligand>
</feature>
<feature type="binding site" evidence="1">
    <location>
        <position position="85"/>
    </location>
    <ligand>
        <name>ATP</name>
        <dbReference type="ChEBI" id="CHEBI:30616"/>
    </ligand>
</feature>
<feature type="binding site" evidence="1">
    <location>
        <position position="91"/>
    </location>
    <ligand>
        <name>ATP</name>
        <dbReference type="ChEBI" id="CHEBI:30616"/>
    </ligand>
</feature>
<feature type="binding site" evidence="1">
    <location>
        <position position="102"/>
    </location>
    <ligand>
        <name>ATP</name>
        <dbReference type="ChEBI" id="CHEBI:30616"/>
    </ligand>
</feature>
<proteinExistence type="inferred from homology"/>
<protein>
    <recommendedName>
        <fullName evidence="1">Nucleoside diphosphate kinase</fullName>
        <shortName evidence="1">NDK</shortName>
        <shortName evidence="1">NDP kinase</shortName>
        <ecNumber evidence="1">2.7.4.6</ecNumber>
    </recommendedName>
    <alternativeName>
        <fullName evidence="1">Nucleoside-2-P kinase</fullName>
    </alternativeName>
</protein>
<accession>Q5M4M4</accession>
<dbReference type="EC" id="2.7.4.6" evidence="1"/>
<dbReference type="EMBL" id="CP000023">
    <property type="protein sequence ID" value="AAV60573.1"/>
    <property type="status" value="ALT_INIT"/>
    <property type="molecule type" value="Genomic_DNA"/>
</dbReference>
<dbReference type="SMR" id="Q5M4M4"/>
<dbReference type="STRING" id="264199.stu0906"/>
<dbReference type="KEGG" id="stl:stu0906"/>
<dbReference type="eggNOG" id="COG0105">
    <property type="taxonomic scope" value="Bacteria"/>
</dbReference>
<dbReference type="HOGENOM" id="CLU_060216_6_3_9"/>
<dbReference type="Proteomes" id="UP000001170">
    <property type="component" value="Chromosome"/>
</dbReference>
<dbReference type="GO" id="GO:0005737">
    <property type="term" value="C:cytoplasm"/>
    <property type="evidence" value="ECO:0007669"/>
    <property type="project" value="UniProtKB-SubCell"/>
</dbReference>
<dbReference type="GO" id="GO:0005524">
    <property type="term" value="F:ATP binding"/>
    <property type="evidence" value="ECO:0007669"/>
    <property type="project" value="UniProtKB-UniRule"/>
</dbReference>
<dbReference type="GO" id="GO:0046872">
    <property type="term" value="F:metal ion binding"/>
    <property type="evidence" value="ECO:0007669"/>
    <property type="project" value="UniProtKB-KW"/>
</dbReference>
<dbReference type="GO" id="GO:0004550">
    <property type="term" value="F:nucleoside diphosphate kinase activity"/>
    <property type="evidence" value="ECO:0007669"/>
    <property type="project" value="UniProtKB-UniRule"/>
</dbReference>
<dbReference type="GO" id="GO:0006241">
    <property type="term" value="P:CTP biosynthetic process"/>
    <property type="evidence" value="ECO:0007669"/>
    <property type="project" value="UniProtKB-UniRule"/>
</dbReference>
<dbReference type="GO" id="GO:0006183">
    <property type="term" value="P:GTP biosynthetic process"/>
    <property type="evidence" value="ECO:0007669"/>
    <property type="project" value="UniProtKB-UniRule"/>
</dbReference>
<dbReference type="GO" id="GO:0006228">
    <property type="term" value="P:UTP biosynthetic process"/>
    <property type="evidence" value="ECO:0007669"/>
    <property type="project" value="UniProtKB-UniRule"/>
</dbReference>
<dbReference type="CDD" id="cd04413">
    <property type="entry name" value="NDPk_I"/>
    <property type="match status" value="1"/>
</dbReference>
<dbReference type="FunFam" id="3.30.70.141:FF:000003">
    <property type="entry name" value="Nucleoside diphosphate kinase"/>
    <property type="match status" value="1"/>
</dbReference>
<dbReference type="Gene3D" id="3.30.70.141">
    <property type="entry name" value="Nucleoside diphosphate kinase-like domain"/>
    <property type="match status" value="1"/>
</dbReference>
<dbReference type="HAMAP" id="MF_00451">
    <property type="entry name" value="NDP_kinase"/>
    <property type="match status" value="1"/>
</dbReference>
<dbReference type="InterPro" id="IPR034907">
    <property type="entry name" value="NDK-like_dom"/>
</dbReference>
<dbReference type="InterPro" id="IPR036850">
    <property type="entry name" value="NDK-like_dom_sf"/>
</dbReference>
<dbReference type="InterPro" id="IPR001564">
    <property type="entry name" value="Nucleoside_diP_kinase"/>
</dbReference>
<dbReference type="InterPro" id="IPR023005">
    <property type="entry name" value="Nucleoside_diP_kinase_AS"/>
</dbReference>
<dbReference type="NCBIfam" id="NF001908">
    <property type="entry name" value="PRK00668.1"/>
    <property type="match status" value="1"/>
</dbReference>
<dbReference type="PANTHER" id="PTHR11349">
    <property type="entry name" value="NUCLEOSIDE DIPHOSPHATE KINASE"/>
    <property type="match status" value="1"/>
</dbReference>
<dbReference type="Pfam" id="PF00334">
    <property type="entry name" value="NDK"/>
    <property type="match status" value="1"/>
</dbReference>
<dbReference type="PRINTS" id="PR01243">
    <property type="entry name" value="NUCDPKINASE"/>
</dbReference>
<dbReference type="SMART" id="SM00562">
    <property type="entry name" value="NDK"/>
    <property type="match status" value="1"/>
</dbReference>
<dbReference type="SUPFAM" id="SSF54919">
    <property type="entry name" value="Nucleoside diphosphate kinase, NDK"/>
    <property type="match status" value="1"/>
</dbReference>
<dbReference type="PROSITE" id="PS00469">
    <property type="entry name" value="NDPK"/>
    <property type="match status" value="1"/>
</dbReference>
<dbReference type="PROSITE" id="PS51374">
    <property type="entry name" value="NDPK_LIKE"/>
    <property type="match status" value="1"/>
</dbReference>
<reference key="1">
    <citation type="journal article" date="2004" name="Nat. Biotechnol.">
        <title>Complete sequence and comparative genome analysis of the dairy bacterium Streptococcus thermophilus.</title>
        <authorList>
            <person name="Bolotin A."/>
            <person name="Quinquis B."/>
            <person name="Renault P."/>
            <person name="Sorokin A."/>
            <person name="Ehrlich S.D."/>
            <person name="Kulakauskas S."/>
            <person name="Lapidus A."/>
            <person name="Goltsman E."/>
            <person name="Mazur M."/>
            <person name="Pusch G.D."/>
            <person name="Fonstein M."/>
            <person name="Overbeek R."/>
            <person name="Kyprides N."/>
            <person name="Purnelle B."/>
            <person name="Prozzi D."/>
            <person name="Ngui K."/>
            <person name="Masuy D."/>
            <person name="Hancy F."/>
            <person name="Burteau S."/>
            <person name="Boutry M."/>
            <person name="Delcour J."/>
            <person name="Goffeau A."/>
            <person name="Hols P."/>
        </authorList>
    </citation>
    <scope>NUCLEOTIDE SEQUENCE [LARGE SCALE GENOMIC DNA]</scope>
    <source>
        <strain>ATCC BAA-250 / LMG 18311</strain>
    </source>
</reference>
<gene>
    <name evidence="1" type="primary">ndk</name>
    <name type="ordered locus">stu0906</name>
</gene>
<organism>
    <name type="scientific">Streptococcus thermophilus (strain ATCC BAA-250 / LMG 18311)</name>
    <dbReference type="NCBI Taxonomy" id="264199"/>
    <lineage>
        <taxon>Bacteria</taxon>
        <taxon>Bacillati</taxon>
        <taxon>Bacillota</taxon>
        <taxon>Bacilli</taxon>
        <taxon>Lactobacillales</taxon>
        <taxon>Streptococcaceae</taxon>
        <taxon>Streptococcus</taxon>
    </lineage>
</organism>